<comment type="function">
    <text evidence="1">GTPase involved in the 5-carboxymethylaminomethyl modification (mnm(5)s(2)U34) of the wobble uridine base in mitochondrial tRNAs.</text>
</comment>
<comment type="subcellular location">
    <subcellularLocation>
        <location>Mitochondrion</location>
    </subcellularLocation>
</comment>
<comment type="similarity">
    <text evidence="3">Belongs to the TRAFAC class TrmE-Era-EngA-EngB-Septin-like GTPase superfamily. TrmE GTPase family.</text>
</comment>
<proteinExistence type="inferred from homology"/>
<dbReference type="EMBL" id="CU329670">
    <property type="protein sequence ID" value="CAB60697.1"/>
    <property type="molecule type" value="Genomic_DNA"/>
</dbReference>
<dbReference type="PIR" id="T50146">
    <property type="entry name" value="T50146"/>
</dbReference>
<dbReference type="RefSeq" id="NP_593144.1">
    <property type="nucleotide sequence ID" value="NM_001018541.2"/>
</dbReference>
<dbReference type="SMR" id="Q9UTE7"/>
<dbReference type="BioGRID" id="278438">
    <property type="interactions" value="17"/>
</dbReference>
<dbReference type="FunCoup" id="Q9UTE7">
    <property type="interactions" value="312"/>
</dbReference>
<dbReference type="STRING" id="284812.Q9UTE7"/>
<dbReference type="iPTMnet" id="Q9UTE7"/>
<dbReference type="SwissPalm" id="Q9UTE7"/>
<dbReference type="PaxDb" id="4896-SPAC222.05c.1"/>
<dbReference type="EnsemblFungi" id="SPAC222.05c.1">
    <property type="protein sequence ID" value="SPAC222.05c.1:pep"/>
    <property type="gene ID" value="SPAC222.05c"/>
</dbReference>
<dbReference type="GeneID" id="2541951"/>
<dbReference type="KEGG" id="spo:2541951"/>
<dbReference type="PomBase" id="SPAC222.05c">
    <property type="gene designation" value="mss1"/>
</dbReference>
<dbReference type="VEuPathDB" id="FungiDB:SPAC222.05c"/>
<dbReference type="eggNOG" id="KOG1191">
    <property type="taxonomic scope" value="Eukaryota"/>
</dbReference>
<dbReference type="HOGENOM" id="CLU_019624_3_1_1"/>
<dbReference type="InParanoid" id="Q9UTE7"/>
<dbReference type="OMA" id="EFHCHGG"/>
<dbReference type="PhylomeDB" id="Q9UTE7"/>
<dbReference type="PRO" id="PR:Q9UTE7"/>
<dbReference type="Proteomes" id="UP000002485">
    <property type="component" value="Chromosome I"/>
</dbReference>
<dbReference type="GO" id="GO:0005737">
    <property type="term" value="C:cytoplasm"/>
    <property type="evidence" value="ECO:0007005"/>
    <property type="project" value="PomBase"/>
</dbReference>
<dbReference type="GO" id="GO:0005743">
    <property type="term" value="C:mitochondrial inner membrane"/>
    <property type="evidence" value="ECO:0000266"/>
    <property type="project" value="PomBase"/>
</dbReference>
<dbReference type="GO" id="GO:0005739">
    <property type="term" value="C:mitochondrion"/>
    <property type="evidence" value="ECO:0000318"/>
    <property type="project" value="GO_Central"/>
</dbReference>
<dbReference type="GO" id="GO:0005525">
    <property type="term" value="F:GTP binding"/>
    <property type="evidence" value="ECO:0000250"/>
    <property type="project" value="PomBase"/>
</dbReference>
<dbReference type="GO" id="GO:0003924">
    <property type="term" value="F:GTPase activity"/>
    <property type="evidence" value="ECO:0000255"/>
    <property type="project" value="PomBase"/>
</dbReference>
<dbReference type="GO" id="GO:0070899">
    <property type="term" value="P:mitochondrial tRNA wobble uridine modification"/>
    <property type="evidence" value="ECO:0000266"/>
    <property type="project" value="PomBase"/>
</dbReference>
<dbReference type="GO" id="GO:0030488">
    <property type="term" value="P:tRNA methylation"/>
    <property type="evidence" value="ECO:0000318"/>
    <property type="project" value="GO_Central"/>
</dbReference>
<dbReference type="GO" id="GO:0002098">
    <property type="term" value="P:tRNA wobble uridine modification"/>
    <property type="evidence" value="ECO:0000318"/>
    <property type="project" value="GO_Central"/>
</dbReference>
<dbReference type="CDD" id="cd04164">
    <property type="entry name" value="trmE"/>
    <property type="match status" value="1"/>
</dbReference>
<dbReference type="CDD" id="cd14858">
    <property type="entry name" value="TrmE_N"/>
    <property type="match status" value="1"/>
</dbReference>
<dbReference type="FunFam" id="3.30.1360.120:FF:000007">
    <property type="entry name" value="tRNA modification GTPase GTPBP3, mitochondrial"/>
    <property type="match status" value="1"/>
</dbReference>
<dbReference type="FunFam" id="3.40.50.300:FF:005899">
    <property type="entry name" value="tRNA modification GTPase mss1, mitochondrial"/>
    <property type="match status" value="1"/>
</dbReference>
<dbReference type="Gene3D" id="3.40.50.300">
    <property type="entry name" value="P-loop containing nucleotide triphosphate hydrolases"/>
    <property type="match status" value="1"/>
</dbReference>
<dbReference type="Gene3D" id="3.30.1360.120">
    <property type="entry name" value="Probable tRNA modification gtpase trme, domain 1"/>
    <property type="match status" value="1"/>
</dbReference>
<dbReference type="Gene3D" id="1.20.120.430">
    <property type="entry name" value="tRNA modification GTPase MnmE domain 2"/>
    <property type="match status" value="1"/>
</dbReference>
<dbReference type="HAMAP" id="MF_00379">
    <property type="entry name" value="GTPase_MnmE"/>
    <property type="match status" value="1"/>
</dbReference>
<dbReference type="InterPro" id="IPR031168">
    <property type="entry name" value="G_TrmE"/>
</dbReference>
<dbReference type="InterPro" id="IPR006073">
    <property type="entry name" value="GTP-bd"/>
</dbReference>
<dbReference type="InterPro" id="IPR018948">
    <property type="entry name" value="GTP-bd_TrmE_N"/>
</dbReference>
<dbReference type="InterPro" id="IPR004520">
    <property type="entry name" value="GTPase_MnmE"/>
</dbReference>
<dbReference type="InterPro" id="IPR027368">
    <property type="entry name" value="MnmE_dom2"/>
</dbReference>
<dbReference type="InterPro" id="IPR025867">
    <property type="entry name" value="MnmE_helical"/>
</dbReference>
<dbReference type="InterPro" id="IPR027417">
    <property type="entry name" value="P-loop_NTPase"/>
</dbReference>
<dbReference type="InterPro" id="IPR005225">
    <property type="entry name" value="Small_GTP-bd"/>
</dbReference>
<dbReference type="InterPro" id="IPR027266">
    <property type="entry name" value="TrmE/GcvT_dom1"/>
</dbReference>
<dbReference type="NCBIfam" id="TIGR00450">
    <property type="entry name" value="mnmE_trmE_thdF"/>
    <property type="match status" value="1"/>
</dbReference>
<dbReference type="NCBIfam" id="NF003661">
    <property type="entry name" value="PRK05291.1-3"/>
    <property type="match status" value="1"/>
</dbReference>
<dbReference type="NCBIfam" id="TIGR00231">
    <property type="entry name" value="small_GTP"/>
    <property type="match status" value="1"/>
</dbReference>
<dbReference type="PANTHER" id="PTHR42714">
    <property type="entry name" value="TRNA MODIFICATION GTPASE GTPBP3"/>
    <property type="match status" value="1"/>
</dbReference>
<dbReference type="PANTHER" id="PTHR42714:SF2">
    <property type="entry name" value="TRNA MODIFICATION GTPASE GTPBP3, MITOCHONDRIAL"/>
    <property type="match status" value="1"/>
</dbReference>
<dbReference type="Pfam" id="PF01926">
    <property type="entry name" value="MMR_HSR1"/>
    <property type="match status" value="1"/>
</dbReference>
<dbReference type="Pfam" id="PF12631">
    <property type="entry name" value="MnmE_helical"/>
    <property type="match status" value="1"/>
</dbReference>
<dbReference type="Pfam" id="PF10396">
    <property type="entry name" value="TrmE_N"/>
    <property type="match status" value="1"/>
</dbReference>
<dbReference type="SUPFAM" id="SSF52540">
    <property type="entry name" value="P-loop containing nucleoside triphosphate hydrolases"/>
    <property type="match status" value="1"/>
</dbReference>
<dbReference type="PROSITE" id="PS51709">
    <property type="entry name" value="G_TRME"/>
    <property type="match status" value="1"/>
</dbReference>
<reference key="1">
    <citation type="journal article" date="2002" name="Nature">
        <title>The genome sequence of Schizosaccharomyces pombe.</title>
        <authorList>
            <person name="Wood V."/>
            <person name="Gwilliam R."/>
            <person name="Rajandream M.A."/>
            <person name="Lyne M.H."/>
            <person name="Lyne R."/>
            <person name="Stewart A."/>
            <person name="Sgouros J.G."/>
            <person name="Peat N."/>
            <person name="Hayles J."/>
            <person name="Baker S.G."/>
            <person name="Basham D."/>
            <person name="Bowman S."/>
            <person name="Brooks K."/>
            <person name="Brown D."/>
            <person name="Brown S."/>
            <person name="Chillingworth T."/>
            <person name="Churcher C.M."/>
            <person name="Collins M."/>
            <person name="Connor R."/>
            <person name="Cronin A."/>
            <person name="Davis P."/>
            <person name="Feltwell T."/>
            <person name="Fraser A."/>
            <person name="Gentles S."/>
            <person name="Goble A."/>
            <person name="Hamlin N."/>
            <person name="Harris D.E."/>
            <person name="Hidalgo J."/>
            <person name="Hodgson G."/>
            <person name="Holroyd S."/>
            <person name="Hornsby T."/>
            <person name="Howarth S."/>
            <person name="Huckle E.J."/>
            <person name="Hunt S."/>
            <person name="Jagels K."/>
            <person name="James K.D."/>
            <person name="Jones L."/>
            <person name="Jones M."/>
            <person name="Leather S."/>
            <person name="McDonald S."/>
            <person name="McLean J."/>
            <person name="Mooney P."/>
            <person name="Moule S."/>
            <person name="Mungall K.L."/>
            <person name="Murphy L.D."/>
            <person name="Niblett D."/>
            <person name="Odell C."/>
            <person name="Oliver K."/>
            <person name="O'Neil S."/>
            <person name="Pearson D."/>
            <person name="Quail M.A."/>
            <person name="Rabbinowitsch E."/>
            <person name="Rutherford K.M."/>
            <person name="Rutter S."/>
            <person name="Saunders D."/>
            <person name="Seeger K."/>
            <person name="Sharp S."/>
            <person name="Skelton J."/>
            <person name="Simmonds M.N."/>
            <person name="Squares R."/>
            <person name="Squares S."/>
            <person name="Stevens K."/>
            <person name="Taylor K."/>
            <person name="Taylor R.G."/>
            <person name="Tivey A."/>
            <person name="Walsh S.V."/>
            <person name="Warren T."/>
            <person name="Whitehead S."/>
            <person name="Woodward J.R."/>
            <person name="Volckaert G."/>
            <person name="Aert R."/>
            <person name="Robben J."/>
            <person name="Grymonprez B."/>
            <person name="Weltjens I."/>
            <person name="Vanstreels E."/>
            <person name="Rieger M."/>
            <person name="Schaefer M."/>
            <person name="Mueller-Auer S."/>
            <person name="Gabel C."/>
            <person name="Fuchs M."/>
            <person name="Duesterhoeft A."/>
            <person name="Fritzc C."/>
            <person name="Holzer E."/>
            <person name="Moestl D."/>
            <person name="Hilbert H."/>
            <person name="Borzym K."/>
            <person name="Langer I."/>
            <person name="Beck A."/>
            <person name="Lehrach H."/>
            <person name="Reinhardt R."/>
            <person name="Pohl T.M."/>
            <person name="Eger P."/>
            <person name="Zimmermann W."/>
            <person name="Wedler H."/>
            <person name="Wambutt R."/>
            <person name="Purnelle B."/>
            <person name="Goffeau A."/>
            <person name="Cadieu E."/>
            <person name="Dreano S."/>
            <person name="Gloux S."/>
            <person name="Lelaure V."/>
            <person name="Mottier S."/>
            <person name="Galibert F."/>
            <person name="Aves S.J."/>
            <person name="Xiang Z."/>
            <person name="Hunt C."/>
            <person name="Moore K."/>
            <person name="Hurst S.M."/>
            <person name="Lucas M."/>
            <person name="Rochet M."/>
            <person name="Gaillardin C."/>
            <person name="Tallada V.A."/>
            <person name="Garzon A."/>
            <person name="Thode G."/>
            <person name="Daga R.R."/>
            <person name="Cruzado L."/>
            <person name="Jimenez J."/>
            <person name="Sanchez M."/>
            <person name="del Rey F."/>
            <person name="Benito J."/>
            <person name="Dominguez A."/>
            <person name="Revuelta J.L."/>
            <person name="Moreno S."/>
            <person name="Armstrong J."/>
            <person name="Forsburg S.L."/>
            <person name="Cerutti L."/>
            <person name="Lowe T."/>
            <person name="McCombie W.R."/>
            <person name="Paulsen I."/>
            <person name="Potashkin J."/>
            <person name="Shpakovski G.V."/>
            <person name="Ussery D."/>
            <person name="Barrell B.G."/>
            <person name="Nurse P."/>
        </authorList>
    </citation>
    <scope>NUCLEOTIDE SEQUENCE [LARGE SCALE GENOMIC DNA]</scope>
    <source>
        <strain>972 / ATCC 24843</strain>
    </source>
</reference>
<gene>
    <name type="primary">mss1</name>
    <name type="ORF">SPAC222.05c</name>
</gene>
<organism>
    <name type="scientific">Schizosaccharomyces pombe (strain 972 / ATCC 24843)</name>
    <name type="common">Fission yeast</name>
    <dbReference type="NCBI Taxonomy" id="284812"/>
    <lineage>
        <taxon>Eukaryota</taxon>
        <taxon>Fungi</taxon>
        <taxon>Dikarya</taxon>
        <taxon>Ascomycota</taxon>
        <taxon>Taphrinomycotina</taxon>
        <taxon>Schizosaccharomycetes</taxon>
        <taxon>Schizosaccharomycetales</taxon>
        <taxon>Schizosaccharomycetaceae</taxon>
        <taxon>Schizosaccharomyces</taxon>
    </lineage>
</organism>
<accession>Q9UTE7</accession>
<evidence type="ECO:0000250" key="1"/>
<evidence type="ECO:0000255" key="2"/>
<evidence type="ECO:0000305" key="3"/>
<name>MSS1_SCHPO</name>
<protein>
    <recommendedName>
        <fullName>tRNA modification GTPase mss1, mitochondrial</fullName>
    </recommendedName>
</protein>
<sequence>MRILNRVFLNTFQACFRRFVHQIPTIYALSTPPGTSAVAIVRISGPNACKVAKTLAGSVPKPRIASLRTIKHPVRSEVIDKALMLYFKKPSSFTGEDVVELQLHGGTAVVDVTLEAIKQSGIPNIRYAKPGEFSERAFYNGRADLTQLEGLIDVINAQTAEQLYSANKEAHGSIYDICFRWRKKLIEYRAFLEASIDFSEEHELDDIETIKLFEELNEMKDEIDAHIEGGKCKEVLRKGINVAILGPSNAGKSSLINLLANRRISIVSPQSGTTRDAIEVLVDINGFPVLLSDTAGLRKGEDVQEIEKIGIEIAKARAEESQLTLFVFPINYHSFSESLKQSEILETIKDCLRQRKPIHFLINKVDCVSDYTTMFKPIKAYLQKNFLIPENRIHAVSCKTKEGLIDFLQALSSTFECMVNPLTNNKIQANLGWNERQRQCLSSCSSHLSLALQKSSDIVVAAEEVKLATEDIGRVTGAVDMENVFSVIFSKFCVGK</sequence>
<feature type="transit peptide" description="Mitochondrion" evidence="2">
    <location>
        <begin position="1"/>
        <end position="19"/>
    </location>
</feature>
<feature type="chain" id="PRO_0000035780" description="tRNA modification GTPase mss1, mitochondrial">
    <location>
        <begin position="20"/>
        <end position="496"/>
    </location>
</feature>
<feature type="domain" description="TrmE-type G">
    <location>
        <begin position="239"/>
        <end position="416"/>
    </location>
</feature>
<feature type="binding site" evidence="2">
    <location>
        <begin position="246"/>
        <end position="253"/>
    </location>
    <ligand>
        <name>GTP</name>
        <dbReference type="ChEBI" id="CHEBI:37565"/>
    </ligand>
</feature>
<feature type="binding site" evidence="2">
    <location>
        <begin position="293"/>
        <end position="297"/>
    </location>
    <ligand>
        <name>GTP</name>
        <dbReference type="ChEBI" id="CHEBI:37565"/>
    </ligand>
</feature>
<feature type="binding site" evidence="2">
    <location>
        <begin position="363"/>
        <end position="366"/>
    </location>
    <ligand>
        <name>GTP</name>
        <dbReference type="ChEBI" id="CHEBI:37565"/>
    </ligand>
</feature>
<keyword id="KW-0342">GTP-binding</keyword>
<keyword id="KW-0496">Mitochondrion</keyword>
<keyword id="KW-0547">Nucleotide-binding</keyword>
<keyword id="KW-1185">Reference proteome</keyword>
<keyword id="KW-0809">Transit peptide</keyword>
<keyword id="KW-0819">tRNA processing</keyword>